<gene>
    <name evidence="1" type="primary">katG</name>
    <name type="ordered locus">Mmar10_2686</name>
</gene>
<evidence type="ECO:0000255" key="1">
    <source>
        <dbReference type="HAMAP-Rule" id="MF_01961"/>
    </source>
</evidence>
<proteinExistence type="inferred from homology"/>
<comment type="function">
    <text evidence="1">Bifunctional enzyme with both catalase and broad-spectrum peroxidase activity.</text>
</comment>
<comment type="catalytic activity">
    <reaction evidence="1">
        <text>H2O2 + AH2 = A + 2 H2O</text>
        <dbReference type="Rhea" id="RHEA:30275"/>
        <dbReference type="ChEBI" id="CHEBI:13193"/>
        <dbReference type="ChEBI" id="CHEBI:15377"/>
        <dbReference type="ChEBI" id="CHEBI:16240"/>
        <dbReference type="ChEBI" id="CHEBI:17499"/>
        <dbReference type="EC" id="1.11.1.21"/>
    </reaction>
</comment>
<comment type="catalytic activity">
    <reaction evidence="1">
        <text>2 H2O2 = O2 + 2 H2O</text>
        <dbReference type="Rhea" id="RHEA:20309"/>
        <dbReference type="ChEBI" id="CHEBI:15377"/>
        <dbReference type="ChEBI" id="CHEBI:15379"/>
        <dbReference type="ChEBI" id="CHEBI:16240"/>
        <dbReference type="EC" id="1.11.1.21"/>
    </reaction>
</comment>
<comment type="cofactor">
    <cofactor evidence="1">
        <name>heme b</name>
        <dbReference type="ChEBI" id="CHEBI:60344"/>
    </cofactor>
    <text evidence="1">Binds 1 heme b (iron(II)-protoporphyrin IX) group per dimer.</text>
</comment>
<comment type="subunit">
    <text evidence="1">Homodimer or homotetramer.</text>
</comment>
<comment type="PTM">
    <text evidence="1">Formation of the three residue Trp-Tyr-Met cross-link is important for the catalase, but not the peroxidase activity of the enzyme.</text>
</comment>
<comment type="similarity">
    <text evidence="1">Belongs to the peroxidase family. Peroxidase/catalase subfamily.</text>
</comment>
<protein>
    <recommendedName>
        <fullName evidence="1">Catalase-peroxidase</fullName>
        <shortName evidence="1">CP</shortName>
        <ecNumber evidence="1">1.11.1.21</ecNumber>
    </recommendedName>
    <alternativeName>
        <fullName evidence="1">Peroxidase/catalase</fullName>
    </alternativeName>
</protein>
<keyword id="KW-0349">Heme</keyword>
<keyword id="KW-0376">Hydrogen peroxide</keyword>
<keyword id="KW-0408">Iron</keyword>
<keyword id="KW-0479">Metal-binding</keyword>
<keyword id="KW-0560">Oxidoreductase</keyword>
<keyword id="KW-0575">Peroxidase</keyword>
<keyword id="KW-1185">Reference proteome</keyword>
<name>KATG_MARMM</name>
<dbReference type="EC" id="1.11.1.21" evidence="1"/>
<dbReference type="EMBL" id="CP000449">
    <property type="protein sequence ID" value="ABI66972.1"/>
    <property type="molecule type" value="Genomic_DNA"/>
</dbReference>
<dbReference type="RefSeq" id="WP_011644616.1">
    <property type="nucleotide sequence ID" value="NC_008347.1"/>
</dbReference>
<dbReference type="SMR" id="Q0AL71"/>
<dbReference type="STRING" id="394221.Mmar10_2686"/>
<dbReference type="KEGG" id="mmr:Mmar10_2686"/>
<dbReference type="eggNOG" id="COG0376">
    <property type="taxonomic scope" value="Bacteria"/>
</dbReference>
<dbReference type="HOGENOM" id="CLU_025424_2_0_5"/>
<dbReference type="OrthoDB" id="9759743at2"/>
<dbReference type="Proteomes" id="UP000001964">
    <property type="component" value="Chromosome"/>
</dbReference>
<dbReference type="GO" id="GO:0005829">
    <property type="term" value="C:cytosol"/>
    <property type="evidence" value="ECO:0007669"/>
    <property type="project" value="TreeGrafter"/>
</dbReference>
<dbReference type="GO" id="GO:0004096">
    <property type="term" value="F:catalase activity"/>
    <property type="evidence" value="ECO:0007669"/>
    <property type="project" value="UniProtKB-UniRule"/>
</dbReference>
<dbReference type="GO" id="GO:0020037">
    <property type="term" value="F:heme binding"/>
    <property type="evidence" value="ECO:0007669"/>
    <property type="project" value="InterPro"/>
</dbReference>
<dbReference type="GO" id="GO:0046872">
    <property type="term" value="F:metal ion binding"/>
    <property type="evidence" value="ECO:0007669"/>
    <property type="project" value="UniProtKB-KW"/>
</dbReference>
<dbReference type="GO" id="GO:0070301">
    <property type="term" value="P:cellular response to hydrogen peroxide"/>
    <property type="evidence" value="ECO:0007669"/>
    <property type="project" value="TreeGrafter"/>
</dbReference>
<dbReference type="GO" id="GO:0042744">
    <property type="term" value="P:hydrogen peroxide catabolic process"/>
    <property type="evidence" value="ECO:0007669"/>
    <property type="project" value="UniProtKB-KW"/>
</dbReference>
<dbReference type="CDD" id="cd08200">
    <property type="entry name" value="catalase_peroxidase_2"/>
    <property type="match status" value="1"/>
</dbReference>
<dbReference type="FunFam" id="1.10.420.10:FF:000004">
    <property type="entry name" value="Catalase-peroxidase"/>
    <property type="match status" value="1"/>
</dbReference>
<dbReference type="FunFam" id="1.10.520.10:FF:000002">
    <property type="entry name" value="Catalase-peroxidase"/>
    <property type="match status" value="1"/>
</dbReference>
<dbReference type="Gene3D" id="1.10.520.10">
    <property type="match status" value="2"/>
</dbReference>
<dbReference type="Gene3D" id="1.10.420.10">
    <property type="entry name" value="Peroxidase, domain 2"/>
    <property type="match status" value="2"/>
</dbReference>
<dbReference type="HAMAP" id="MF_01961">
    <property type="entry name" value="Catal_peroxid"/>
    <property type="match status" value="1"/>
</dbReference>
<dbReference type="InterPro" id="IPR000763">
    <property type="entry name" value="Catalase_peroxidase"/>
</dbReference>
<dbReference type="InterPro" id="IPR002016">
    <property type="entry name" value="Haem_peroxidase"/>
</dbReference>
<dbReference type="InterPro" id="IPR010255">
    <property type="entry name" value="Haem_peroxidase_sf"/>
</dbReference>
<dbReference type="InterPro" id="IPR019794">
    <property type="entry name" value="Peroxidases_AS"/>
</dbReference>
<dbReference type="NCBIfam" id="TIGR00198">
    <property type="entry name" value="cat_per_HPI"/>
    <property type="match status" value="1"/>
</dbReference>
<dbReference type="NCBIfam" id="NF011635">
    <property type="entry name" value="PRK15061.1"/>
    <property type="match status" value="1"/>
</dbReference>
<dbReference type="PANTHER" id="PTHR30555:SF6">
    <property type="entry name" value="CATALASE-PEROXIDASE"/>
    <property type="match status" value="1"/>
</dbReference>
<dbReference type="PANTHER" id="PTHR30555">
    <property type="entry name" value="HYDROPEROXIDASE I, BIFUNCTIONAL CATALASE-PEROXIDASE"/>
    <property type="match status" value="1"/>
</dbReference>
<dbReference type="Pfam" id="PF00141">
    <property type="entry name" value="peroxidase"/>
    <property type="match status" value="2"/>
</dbReference>
<dbReference type="PRINTS" id="PR00460">
    <property type="entry name" value="BPEROXIDASE"/>
</dbReference>
<dbReference type="PRINTS" id="PR00458">
    <property type="entry name" value="PEROXIDASE"/>
</dbReference>
<dbReference type="SUPFAM" id="SSF48113">
    <property type="entry name" value="Heme-dependent peroxidases"/>
    <property type="match status" value="2"/>
</dbReference>
<dbReference type="PROSITE" id="PS00436">
    <property type="entry name" value="PEROXIDASE_2"/>
    <property type="match status" value="1"/>
</dbReference>
<dbReference type="PROSITE" id="PS50873">
    <property type="entry name" value="PEROXIDASE_4"/>
    <property type="match status" value="1"/>
</dbReference>
<sequence length="724" mass="79054">MDGNNSNSQGKCPVMHGGNTASEGDVMAWWPRALNLEILHQKDTKPNPMGDGPSYHEALKSLDFDALKTDMHALLTDSQDWWPADYGHYGGLMIRLAWHSAGSYRLADGRGGGGSGNIRFAPLNSWPDNGNLDKARRLLWPLKKKYGNKISWADLILLAGTIAYENMGLKTFGFGFGREDIWGPEIDTYWGAEKEWLAPSDTRYEDVAKPDTMENPLAAVQMGLIYVNPEGVNGKPDPLKTAAQVRTTFARMAMNDEETAALTAGGHTVGKTHGNGDAGALGPEPEGAELENQGFGWVNPNLGGKASNAVTSGLEGAWTTNPTQFDMGYFELLFGYEWELKKSPAGAQQWQPINIKPEHMPVDASDPSQRRMPIMTDADMAMKMDPAYRAICEKFMADPAYFKDTFARAWFKLTHRDMGPKDCYFGPDVPSEELVWQDPVPAGPTGYDVARVKSAIAASGLSIAEMVATAWDSARTFRGSDKRGGANGARIRLAPQKDWDGNEPDRLAKVLGVLEPIARDAGASLADVIVLAGNVGIEQAARAAGHDVAVPFSPGRGDATDAMTDAESFDVLEPLADGYRNWQKADYVVSAEEMLLDRTQLLGLTAPEMTVLVGGMRVLGTNYGGTKHGVFTDREGALTTDFFVNLTDMAYSWVPVDRRTYEIRDRKTGKARWTATRADLVFGSNSILRAYAEVYAQDDNAGKFVADFVAAWTKVMNADRFDLA</sequence>
<accession>Q0AL71</accession>
<organism>
    <name type="scientific">Maricaulis maris (strain MCS10)</name>
    <name type="common">Caulobacter maris</name>
    <dbReference type="NCBI Taxonomy" id="394221"/>
    <lineage>
        <taxon>Bacteria</taxon>
        <taxon>Pseudomonadati</taxon>
        <taxon>Pseudomonadota</taxon>
        <taxon>Alphaproteobacteria</taxon>
        <taxon>Maricaulales</taxon>
        <taxon>Maricaulaceae</taxon>
        <taxon>Maricaulis</taxon>
    </lineage>
</organism>
<feature type="chain" id="PRO_0000354827" description="Catalase-peroxidase">
    <location>
        <begin position="1"/>
        <end position="724"/>
    </location>
</feature>
<feature type="active site" description="Proton acceptor" evidence="1">
    <location>
        <position position="99"/>
    </location>
</feature>
<feature type="binding site" description="axial binding residue" evidence="1">
    <location>
        <position position="267"/>
    </location>
    <ligand>
        <name>heme b</name>
        <dbReference type="ChEBI" id="CHEBI:60344"/>
    </ligand>
    <ligandPart>
        <name>Fe</name>
        <dbReference type="ChEBI" id="CHEBI:18248"/>
    </ligandPart>
</feature>
<feature type="site" description="Transition state stabilizer" evidence="1">
    <location>
        <position position="95"/>
    </location>
</feature>
<feature type="cross-link" description="Tryptophyl-tyrosyl-methioninium (Trp-Tyr) (with M-252)" evidence="1">
    <location>
        <begin position="98"/>
        <end position="226"/>
    </location>
</feature>
<feature type="cross-link" description="Tryptophyl-tyrosyl-methioninium (Tyr-Met) (with W-98)" evidence="1">
    <location>
        <begin position="226"/>
        <end position="252"/>
    </location>
</feature>
<reference key="1">
    <citation type="submission" date="2006-08" db="EMBL/GenBank/DDBJ databases">
        <title>Complete sequence of Maricaulis maris MCS10.</title>
        <authorList>
            <consortium name="US DOE Joint Genome Institute"/>
            <person name="Copeland A."/>
            <person name="Lucas S."/>
            <person name="Lapidus A."/>
            <person name="Barry K."/>
            <person name="Detter J.C."/>
            <person name="Glavina del Rio T."/>
            <person name="Hammon N."/>
            <person name="Israni S."/>
            <person name="Dalin E."/>
            <person name="Tice H."/>
            <person name="Pitluck S."/>
            <person name="Saunders E."/>
            <person name="Brettin T."/>
            <person name="Bruce D."/>
            <person name="Han C."/>
            <person name="Tapia R."/>
            <person name="Gilna P."/>
            <person name="Schmutz J."/>
            <person name="Larimer F."/>
            <person name="Land M."/>
            <person name="Hauser L."/>
            <person name="Kyrpides N."/>
            <person name="Mikhailova N."/>
            <person name="Viollier P."/>
            <person name="Stephens C."/>
            <person name="Richardson P."/>
        </authorList>
    </citation>
    <scope>NUCLEOTIDE SEQUENCE [LARGE SCALE GENOMIC DNA]</scope>
    <source>
        <strain>MCS10</strain>
    </source>
</reference>